<sequence>MEVIHAWSAPRSLSTTLMYSFAQRDDIEVLDEPLYAAFLKSTGVDRPYKDELLSKMECDGEKVVKDIIYGPGKKKYRFCKHISKQRLLGLPSELMSEGKHFILIRNPLNILPSFEKIHPSSFHELGLGELVSIYSDLCQMGTPPAIIDADELQRDPEATLRSLCDDLEIPFQASMLKWEAGPIPEDGLWAPWWYETLHKSTGFSSPQKYPQTFPLMHYDLLEQCLPLYNILRCHMKHKSSLLSSTLPPPSLPVPENAKLLAWVGDEIVPREMAKVSVFDSVVQGGDSVWEGLRIYKGKVFKLEEHLDRLSDSAKALAFNNVPTREEIKEAIFRTLITNGMFDNTHIRLSLTRGKKVTSGMSPAFNRYGCTLIVLAEWKPPVYDNDGGIVLVTATTRRNSPNNLDSKIHHNNLLNNILAKIESNNANVDDAIMLDKDGFVSETNATNIFMVKKDRVLTPHADYCLPGITRATVMELVVKENFILEERRISLSEFHTADEVWTTGTMGELSPVVKIDGRVIGEGKVGPVTRRLQNAYKKLTDGSGVPIPTYQEVKNLEPCV</sequence>
<evidence type="ECO:0000305" key="1"/>
<keyword id="KW-0025">Alternative splicing</keyword>
<keyword id="KW-1185">Reference proteome</keyword>
<accession>Q9ASR4</accession>
<proteinExistence type="evidence at transcript level"/>
<dbReference type="EMBL" id="AC007123">
    <property type="status" value="NOT_ANNOTATED_CDS"/>
    <property type="molecule type" value="Genomic_DNA"/>
</dbReference>
<dbReference type="EMBL" id="CP002688">
    <property type="protein sequence ID" value="AED93683.1"/>
    <property type="molecule type" value="Genomic_DNA"/>
</dbReference>
<dbReference type="EMBL" id="AF367323">
    <property type="protein sequence ID" value="AAK32910.1"/>
    <property type="molecule type" value="mRNA"/>
</dbReference>
<dbReference type="EMBL" id="BT000517">
    <property type="protein sequence ID" value="AAN18086.1"/>
    <property type="molecule type" value="mRNA"/>
</dbReference>
<dbReference type="RefSeq" id="NP_568496.1">
    <molecule id="Q9ASR4-1"/>
    <property type="nucleotide sequence ID" value="NM_122623.4"/>
</dbReference>
<dbReference type="SMR" id="Q9ASR4"/>
<dbReference type="FunCoup" id="Q9ASR4">
    <property type="interactions" value="6"/>
</dbReference>
<dbReference type="STRING" id="3702.Q9ASR4"/>
<dbReference type="iPTMnet" id="Q9ASR4"/>
<dbReference type="PaxDb" id="3702-AT5G27410.2"/>
<dbReference type="ProteomicsDB" id="240752">
    <molecule id="Q9ASR4-1"/>
</dbReference>
<dbReference type="EnsemblPlants" id="AT5G27410.1">
    <molecule id="Q9ASR4-1"/>
    <property type="protein sequence ID" value="AT5G27410.1"/>
    <property type="gene ID" value="AT5G27410"/>
</dbReference>
<dbReference type="GeneID" id="832800"/>
<dbReference type="Gramene" id="AT5G27410.1">
    <molecule id="Q9ASR4-1"/>
    <property type="protein sequence ID" value="AT5G27410.1"/>
    <property type="gene ID" value="AT5G27410"/>
</dbReference>
<dbReference type="KEGG" id="ath:AT5G27410"/>
<dbReference type="Araport" id="AT5G27410"/>
<dbReference type="TAIR" id="AT5G27410"/>
<dbReference type="eggNOG" id="KOG0975">
    <property type="taxonomic scope" value="Eukaryota"/>
</dbReference>
<dbReference type="eggNOG" id="KOG2497">
    <property type="taxonomic scope" value="Eukaryota"/>
</dbReference>
<dbReference type="HOGENOM" id="CLU_020844_5_1_1"/>
<dbReference type="InParanoid" id="Q9ASR4"/>
<dbReference type="PhylomeDB" id="Q9ASR4"/>
<dbReference type="PRO" id="PR:Q9ASR4"/>
<dbReference type="Proteomes" id="UP000006548">
    <property type="component" value="Chromosome 5"/>
</dbReference>
<dbReference type="ExpressionAtlas" id="Q9ASR4">
    <property type="expression patterns" value="baseline and differential"/>
</dbReference>
<dbReference type="GO" id="GO:0003824">
    <property type="term" value="F:catalytic activity"/>
    <property type="evidence" value="ECO:0007669"/>
    <property type="project" value="InterPro"/>
</dbReference>
<dbReference type="GO" id="GO:0046394">
    <property type="term" value="P:carboxylic acid biosynthetic process"/>
    <property type="evidence" value="ECO:0007669"/>
    <property type="project" value="UniProtKB-ARBA"/>
</dbReference>
<dbReference type="CDD" id="cd01558">
    <property type="entry name" value="D-AAT_like"/>
    <property type="match status" value="1"/>
</dbReference>
<dbReference type="FunFam" id="3.30.470.10:FF:000010">
    <property type="entry name" value="Branched-chain-amino-acid aminotransferase-like protein 1"/>
    <property type="match status" value="1"/>
</dbReference>
<dbReference type="FunFam" id="3.20.10.10:FF:000011">
    <property type="entry name" value="Branched-chain-amino-acid aminotransferase-like protein 2"/>
    <property type="match status" value="1"/>
</dbReference>
<dbReference type="FunFam" id="3.40.50.300:FF:001594">
    <property type="entry name" value="Branched-chain-amino-acid aminotransferase-like protein 2"/>
    <property type="match status" value="1"/>
</dbReference>
<dbReference type="Gene3D" id="3.30.470.10">
    <property type="match status" value="1"/>
</dbReference>
<dbReference type="Gene3D" id="3.20.10.10">
    <property type="entry name" value="D-amino Acid Aminotransferase, subunit A, domain 2"/>
    <property type="match status" value="1"/>
</dbReference>
<dbReference type="Gene3D" id="3.40.50.300">
    <property type="entry name" value="P-loop containing nucleotide triphosphate hydrolases"/>
    <property type="match status" value="1"/>
</dbReference>
<dbReference type="InterPro" id="IPR001544">
    <property type="entry name" value="Aminotrans_IV"/>
</dbReference>
<dbReference type="InterPro" id="IPR036038">
    <property type="entry name" value="Aminotransferase-like"/>
</dbReference>
<dbReference type="InterPro" id="IPR043132">
    <property type="entry name" value="BCAT-like_C"/>
</dbReference>
<dbReference type="InterPro" id="IPR043131">
    <property type="entry name" value="BCAT-like_N"/>
</dbReference>
<dbReference type="InterPro" id="IPR050571">
    <property type="entry name" value="Class-IV_PLP-Dep_Aminotrnsfr"/>
</dbReference>
<dbReference type="InterPro" id="IPR027417">
    <property type="entry name" value="P-loop_NTPase"/>
</dbReference>
<dbReference type="PANTHER" id="PTHR42743">
    <property type="entry name" value="AMINO-ACID AMINOTRANSFERASE"/>
    <property type="match status" value="1"/>
</dbReference>
<dbReference type="PANTHER" id="PTHR42743:SF21">
    <property type="entry name" value="BRANCHED-CHAIN-AMINO-ACID AMINOTRANSFERASE-LIKE PROTEIN 2"/>
    <property type="match status" value="1"/>
</dbReference>
<dbReference type="Pfam" id="PF01063">
    <property type="entry name" value="Aminotran_4"/>
    <property type="match status" value="1"/>
</dbReference>
<dbReference type="Pfam" id="PF19798">
    <property type="entry name" value="Sulfotransfer_5"/>
    <property type="match status" value="1"/>
</dbReference>
<dbReference type="SUPFAM" id="SSF56752">
    <property type="entry name" value="D-aminoacid aminotransferase-like PLP-dependent enzymes"/>
    <property type="match status" value="1"/>
</dbReference>
<dbReference type="SUPFAM" id="SSF52540">
    <property type="entry name" value="P-loop containing nucleoside triphosphate hydrolases"/>
    <property type="match status" value="1"/>
</dbReference>
<name>BCAL2_ARATH</name>
<gene>
    <name type="ordered locus">At5g27410</name>
    <name type="ORF">F21A20_120</name>
</gene>
<feature type="chain" id="PRO_0000103301" description="Branched-chain-amino-acid aminotransferase-like protein 2">
    <location>
        <begin position="1"/>
        <end position="559"/>
    </location>
</feature>
<protein>
    <recommendedName>
        <fullName>Branched-chain-amino-acid aminotransferase-like protein 2</fullName>
    </recommendedName>
</protein>
<reference key="1">
    <citation type="journal article" date="2000" name="Nature">
        <title>Sequence and analysis of chromosome 5 of the plant Arabidopsis thaliana.</title>
        <authorList>
            <person name="Tabata S."/>
            <person name="Kaneko T."/>
            <person name="Nakamura Y."/>
            <person name="Kotani H."/>
            <person name="Kato T."/>
            <person name="Asamizu E."/>
            <person name="Miyajima N."/>
            <person name="Sasamoto S."/>
            <person name="Kimura T."/>
            <person name="Hosouchi T."/>
            <person name="Kawashima K."/>
            <person name="Kohara M."/>
            <person name="Matsumoto M."/>
            <person name="Matsuno A."/>
            <person name="Muraki A."/>
            <person name="Nakayama S."/>
            <person name="Nakazaki N."/>
            <person name="Naruo K."/>
            <person name="Okumura S."/>
            <person name="Shinpo S."/>
            <person name="Takeuchi C."/>
            <person name="Wada T."/>
            <person name="Watanabe A."/>
            <person name="Yamada M."/>
            <person name="Yasuda M."/>
            <person name="Sato S."/>
            <person name="de la Bastide M."/>
            <person name="Huang E."/>
            <person name="Spiegel L."/>
            <person name="Gnoj L."/>
            <person name="O'Shaughnessy A."/>
            <person name="Preston R."/>
            <person name="Habermann K."/>
            <person name="Murray J."/>
            <person name="Johnson D."/>
            <person name="Rohlfing T."/>
            <person name="Nelson J."/>
            <person name="Stoneking T."/>
            <person name="Pepin K."/>
            <person name="Spieth J."/>
            <person name="Sekhon M."/>
            <person name="Armstrong J."/>
            <person name="Becker M."/>
            <person name="Belter E."/>
            <person name="Cordum H."/>
            <person name="Cordes M."/>
            <person name="Courtney L."/>
            <person name="Courtney W."/>
            <person name="Dante M."/>
            <person name="Du H."/>
            <person name="Edwards J."/>
            <person name="Fryman J."/>
            <person name="Haakensen B."/>
            <person name="Lamar E."/>
            <person name="Latreille P."/>
            <person name="Leonard S."/>
            <person name="Meyer R."/>
            <person name="Mulvaney E."/>
            <person name="Ozersky P."/>
            <person name="Riley A."/>
            <person name="Strowmatt C."/>
            <person name="Wagner-McPherson C."/>
            <person name="Wollam A."/>
            <person name="Yoakum M."/>
            <person name="Bell M."/>
            <person name="Dedhia N."/>
            <person name="Parnell L."/>
            <person name="Shah R."/>
            <person name="Rodriguez M."/>
            <person name="Hoon See L."/>
            <person name="Vil D."/>
            <person name="Baker J."/>
            <person name="Kirchoff K."/>
            <person name="Toth K."/>
            <person name="King L."/>
            <person name="Bahret A."/>
            <person name="Miller B."/>
            <person name="Marra M.A."/>
            <person name="Martienssen R."/>
            <person name="McCombie W.R."/>
            <person name="Wilson R.K."/>
            <person name="Murphy G."/>
            <person name="Bancroft I."/>
            <person name="Volckaert G."/>
            <person name="Wambutt R."/>
            <person name="Duesterhoeft A."/>
            <person name="Stiekema W."/>
            <person name="Pohl T."/>
            <person name="Entian K.-D."/>
            <person name="Terryn N."/>
            <person name="Hartley N."/>
            <person name="Bent E."/>
            <person name="Johnson S."/>
            <person name="Langham S.-A."/>
            <person name="McCullagh B."/>
            <person name="Robben J."/>
            <person name="Grymonprez B."/>
            <person name="Zimmermann W."/>
            <person name="Ramsperger U."/>
            <person name="Wedler H."/>
            <person name="Balke K."/>
            <person name="Wedler E."/>
            <person name="Peters S."/>
            <person name="van Staveren M."/>
            <person name="Dirkse W."/>
            <person name="Mooijman P."/>
            <person name="Klein Lankhorst R."/>
            <person name="Weitzenegger T."/>
            <person name="Bothe G."/>
            <person name="Rose M."/>
            <person name="Hauf J."/>
            <person name="Berneiser S."/>
            <person name="Hempel S."/>
            <person name="Feldpausch M."/>
            <person name="Lamberth S."/>
            <person name="Villarroel R."/>
            <person name="Gielen J."/>
            <person name="Ardiles W."/>
            <person name="Bents O."/>
            <person name="Lemcke K."/>
            <person name="Kolesov G."/>
            <person name="Mayer K.F.X."/>
            <person name="Rudd S."/>
            <person name="Schoof H."/>
            <person name="Schueller C."/>
            <person name="Zaccaria P."/>
            <person name="Mewes H.-W."/>
            <person name="Bevan M."/>
            <person name="Fransz P.F."/>
        </authorList>
    </citation>
    <scope>NUCLEOTIDE SEQUENCE [LARGE SCALE GENOMIC DNA]</scope>
    <source>
        <strain>cv. Columbia</strain>
    </source>
</reference>
<reference key="2">
    <citation type="journal article" date="2017" name="Plant J.">
        <title>Araport11: a complete reannotation of the Arabidopsis thaliana reference genome.</title>
        <authorList>
            <person name="Cheng C.Y."/>
            <person name="Krishnakumar V."/>
            <person name="Chan A.P."/>
            <person name="Thibaud-Nissen F."/>
            <person name="Schobel S."/>
            <person name="Town C.D."/>
        </authorList>
    </citation>
    <scope>GENOME REANNOTATION</scope>
    <source>
        <strain>cv. Columbia</strain>
    </source>
</reference>
<reference key="3">
    <citation type="journal article" date="2003" name="Science">
        <title>Empirical analysis of transcriptional activity in the Arabidopsis genome.</title>
        <authorList>
            <person name="Yamada K."/>
            <person name="Lim J."/>
            <person name="Dale J.M."/>
            <person name="Chen H."/>
            <person name="Shinn P."/>
            <person name="Palm C.J."/>
            <person name="Southwick A.M."/>
            <person name="Wu H.C."/>
            <person name="Kim C.J."/>
            <person name="Nguyen M."/>
            <person name="Pham P.K."/>
            <person name="Cheuk R.F."/>
            <person name="Karlin-Newmann G."/>
            <person name="Liu S.X."/>
            <person name="Lam B."/>
            <person name="Sakano H."/>
            <person name="Wu T."/>
            <person name="Yu G."/>
            <person name="Miranda M."/>
            <person name="Quach H.L."/>
            <person name="Tripp M."/>
            <person name="Chang C.H."/>
            <person name="Lee J.M."/>
            <person name="Toriumi M.J."/>
            <person name="Chan M.M."/>
            <person name="Tang C.C."/>
            <person name="Onodera C.S."/>
            <person name="Deng J.M."/>
            <person name="Akiyama K."/>
            <person name="Ansari Y."/>
            <person name="Arakawa T."/>
            <person name="Banh J."/>
            <person name="Banno F."/>
            <person name="Bowser L."/>
            <person name="Brooks S.Y."/>
            <person name="Carninci P."/>
            <person name="Chao Q."/>
            <person name="Choy N."/>
            <person name="Enju A."/>
            <person name="Goldsmith A.D."/>
            <person name="Gurjal M."/>
            <person name="Hansen N.F."/>
            <person name="Hayashizaki Y."/>
            <person name="Johnson-Hopson C."/>
            <person name="Hsuan V.W."/>
            <person name="Iida K."/>
            <person name="Karnes M."/>
            <person name="Khan S."/>
            <person name="Koesema E."/>
            <person name="Ishida J."/>
            <person name="Jiang P.X."/>
            <person name="Jones T."/>
            <person name="Kawai J."/>
            <person name="Kamiya A."/>
            <person name="Meyers C."/>
            <person name="Nakajima M."/>
            <person name="Narusaka M."/>
            <person name="Seki M."/>
            <person name="Sakurai T."/>
            <person name="Satou M."/>
            <person name="Tamse R."/>
            <person name="Vaysberg M."/>
            <person name="Wallender E.K."/>
            <person name="Wong C."/>
            <person name="Yamamura Y."/>
            <person name="Yuan S."/>
            <person name="Shinozaki K."/>
            <person name="Davis R.W."/>
            <person name="Theologis A."/>
            <person name="Ecker J.R."/>
        </authorList>
    </citation>
    <scope>NUCLEOTIDE SEQUENCE [LARGE SCALE MRNA]</scope>
    <source>
        <strain>cv. Columbia</strain>
    </source>
</reference>
<organism>
    <name type="scientific">Arabidopsis thaliana</name>
    <name type="common">Mouse-ear cress</name>
    <dbReference type="NCBI Taxonomy" id="3702"/>
    <lineage>
        <taxon>Eukaryota</taxon>
        <taxon>Viridiplantae</taxon>
        <taxon>Streptophyta</taxon>
        <taxon>Embryophyta</taxon>
        <taxon>Tracheophyta</taxon>
        <taxon>Spermatophyta</taxon>
        <taxon>Magnoliopsida</taxon>
        <taxon>eudicotyledons</taxon>
        <taxon>Gunneridae</taxon>
        <taxon>Pentapetalae</taxon>
        <taxon>rosids</taxon>
        <taxon>malvids</taxon>
        <taxon>Brassicales</taxon>
        <taxon>Brassicaceae</taxon>
        <taxon>Camelineae</taxon>
        <taxon>Arabidopsis</taxon>
    </lineage>
</organism>
<comment type="alternative products">
    <event type="alternative splicing"/>
    <isoform>
        <id>Q9ASR4-1</id>
        <name>1</name>
        <sequence type="displayed"/>
    </isoform>
    <text>A number of isoforms are produced. According to EST sequences.</text>
</comment>
<comment type="similarity">
    <text evidence="1">Belongs to the class-IV pyridoxal-phosphate-dependent aminotransferase family.</text>
</comment>